<sequence>MEEILIVTTNEVAGYRITEVYGEVFGLTTRSRNLFSSAGQQMKTVVGGEINGYTKLQHETRETSIDRMREEAKAKGANAIVAMRFDSSTFQNIDSVAAYGTAVKIEKI</sequence>
<comment type="similarity">
    <text evidence="1">Belongs to the UPF0145 family.</text>
</comment>
<gene>
    <name type="primary">yjfJ</name>
    <name type="ordered locus">LL0934</name>
    <name type="ORF">L158972</name>
</gene>
<feature type="chain" id="PRO_0000138470" description="UPF0145 protein YjfJ">
    <location>
        <begin position="1"/>
        <end position="108"/>
    </location>
</feature>
<evidence type="ECO:0000255" key="1">
    <source>
        <dbReference type="HAMAP-Rule" id="MF_00338"/>
    </source>
</evidence>
<organism>
    <name type="scientific">Lactococcus lactis subsp. lactis (strain IL1403)</name>
    <name type="common">Streptococcus lactis</name>
    <dbReference type="NCBI Taxonomy" id="272623"/>
    <lineage>
        <taxon>Bacteria</taxon>
        <taxon>Bacillati</taxon>
        <taxon>Bacillota</taxon>
        <taxon>Bacilli</taxon>
        <taxon>Lactobacillales</taxon>
        <taxon>Streptococcaceae</taxon>
        <taxon>Lactococcus</taxon>
    </lineage>
</organism>
<dbReference type="EMBL" id="AE005176">
    <property type="protein sequence ID" value="AAK05032.1"/>
    <property type="molecule type" value="Genomic_DNA"/>
</dbReference>
<dbReference type="PIR" id="F86741">
    <property type="entry name" value="F86741"/>
</dbReference>
<dbReference type="RefSeq" id="NP_267090.1">
    <property type="nucleotide sequence ID" value="NC_002662.1"/>
</dbReference>
<dbReference type="RefSeq" id="WP_010905638.1">
    <property type="nucleotide sequence ID" value="NC_002662.1"/>
</dbReference>
<dbReference type="SMR" id="Q9CH08"/>
<dbReference type="PaxDb" id="272623-L158972"/>
<dbReference type="EnsemblBacteria" id="AAK05032">
    <property type="protein sequence ID" value="AAK05032"/>
    <property type="gene ID" value="L158972"/>
</dbReference>
<dbReference type="KEGG" id="lla:L158972"/>
<dbReference type="PATRIC" id="fig|272623.7.peg.999"/>
<dbReference type="eggNOG" id="COG0393">
    <property type="taxonomic scope" value="Bacteria"/>
</dbReference>
<dbReference type="HOGENOM" id="CLU_117144_1_2_9"/>
<dbReference type="OrthoDB" id="9796448at2"/>
<dbReference type="Proteomes" id="UP000002196">
    <property type="component" value="Chromosome"/>
</dbReference>
<dbReference type="Gene3D" id="3.30.110.70">
    <property type="entry name" value="Hypothetical protein apc22750. Chain B"/>
    <property type="match status" value="1"/>
</dbReference>
<dbReference type="HAMAP" id="MF_00338">
    <property type="entry name" value="UPF0145"/>
    <property type="match status" value="1"/>
</dbReference>
<dbReference type="InterPro" id="IPR035439">
    <property type="entry name" value="UPF0145_dom_sf"/>
</dbReference>
<dbReference type="InterPro" id="IPR002765">
    <property type="entry name" value="UPF0145_YbjQ-like"/>
</dbReference>
<dbReference type="PANTHER" id="PTHR34068:SF2">
    <property type="entry name" value="UPF0145 PROTEIN SCO3412"/>
    <property type="match status" value="1"/>
</dbReference>
<dbReference type="PANTHER" id="PTHR34068">
    <property type="entry name" value="UPF0145 PROTEIN YBJQ"/>
    <property type="match status" value="1"/>
</dbReference>
<dbReference type="Pfam" id="PF01906">
    <property type="entry name" value="YbjQ_1"/>
    <property type="match status" value="1"/>
</dbReference>
<dbReference type="SUPFAM" id="SSF117782">
    <property type="entry name" value="YbjQ-like"/>
    <property type="match status" value="1"/>
</dbReference>
<name>YJFJ_LACLA</name>
<protein>
    <recommendedName>
        <fullName evidence="1">UPF0145 protein YjfJ</fullName>
    </recommendedName>
</protein>
<reference key="1">
    <citation type="journal article" date="2001" name="Genome Res.">
        <title>The complete genome sequence of the lactic acid bacterium Lactococcus lactis ssp. lactis IL1403.</title>
        <authorList>
            <person name="Bolotin A."/>
            <person name="Wincker P."/>
            <person name="Mauger S."/>
            <person name="Jaillon O."/>
            <person name="Malarme K."/>
            <person name="Weissenbach J."/>
            <person name="Ehrlich S.D."/>
            <person name="Sorokin A."/>
        </authorList>
    </citation>
    <scope>NUCLEOTIDE SEQUENCE [LARGE SCALE GENOMIC DNA]</scope>
    <source>
        <strain>IL1403</strain>
    </source>
</reference>
<accession>Q9CH08</accession>
<keyword id="KW-1185">Reference proteome</keyword>
<proteinExistence type="inferred from homology"/>